<dbReference type="EMBL" id="AAHF01000001">
    <property type="protein sequence ID" value="EAL93429.1"/>
    <property type="status" value="ALT_INIT"/>
    <property type="molecule type" value="Genomic_DNA"/>
</dbReference>
<dbReference type="RefSeq" id="XP_755467.1">
    <property type="nucleotide sequence ID" value="XM_750374.1"/>
</dbReference>
<dbReference type="SMR" id="Q4X136"/>
<dbReference type="FunCoup" id="Q4X136">
    <property type="interactions" value="110"/>
</dbReference>
<dbReference type="STRING" id="330879.Q4X136"/>
<dbReference type="GeneID" id="3512803"/>
<dbReference type="KEGG" id="afm:AFUA_2G11340"/>
<dbReference type="eggNOG" id="KOG4680">
    <property type="taxonomic scope" value="Eukaryota"/>
</dbReference>
<dbReference type="HOGENOM" id="CLU_097982_0_0_1"/>
<dbReference type="InParanoid" id="Q4X136"/>
<dbReference type="OrthoDB" id="6409159at2759"/>
<dbReference type="Proteomes" id="UP000002530">
    <property type="component" value="Chromosome 2"/>
</dbReference>
<dbReference type="GO" id="GO:0032934">
    <property type="term" value="F:sterol binding"/>
    <property type="evidence" value="ECO:0000318"/>
    <property type="project" value="GO_Central"/>
</dbReference>
<dbReference type="GO" id="GO:0032366">
    <property type="term" value="P:intracellular sterol transport"/>
    <property type="evidence" value="ECO:0007669"/>
    <property type="project" value="InterPro"/>
</dbReference>
<dbReference type="GO" id="GO:0015918">
    <property type="term" value="P:sterol transport"/>
    <property type="evidence" value="ECO:0000318"/>
    <property type="project" value="GO_Central"/>
</dbReference>
<dbReference type="CDD" id="cd00917">
    <property type="entry name" value="PG-PI_TP"/>
    <property type="match status" value="1"/>
</dbReference>
<dbReference type="FunFam" id="2.60.40.770:FF:000004">
    <property type="entry name" value="Phosphatidylglycerol/phosphatidylinositol transfer protein"/>
    <property type="match status" value="1"/>
</dbReference>
<dbReference type="Gene3D" id="2.60.40.770">
    <property type="match status" value="1"/>
</dbReference>
<dbReference type="InterPro" id="IPR014756">
    <property type="entry name" value="Ig_E-set"/>
</dbReference>
<dbReference type="InterPro" id="IPR003172">
    <property type="entry name" value="ML_dom"/>
</dbReference>
<dbReference type="InterPro" id="IPR033917">
    <property type="entry name" value="ML_PG-PI_TP"/>
</dbReference>
<dbReference type="InterPro" id="IPR039670">
    <property type="entry name" value="NPC2-like"/>
</dbReference>
<dbReference type="PANTHER" id="PTHR11306">
    <property type="entry name" value="NIEMANN PICK TYPE C2 PROTEIN NPC2-RELATED"/>
    <property type="match status" value="1"/>
</dbReference>
<dbReference type="PANTHER" id="PTHR11306:SF0">
    <property type="entry name" value="PHOSPHATIDYLGLYCEROL_PHOSPHATIDYLINOSITOL TRANSFER PROTEIN"/>
    <property type="match status" value="1"/>
</dbReference>
<dbReference type="Pfam" id="PF02221">
    <property type="entry name" value="E1_DerP2_DerF2"/>
    <property type="match status" value="1"/>
</dbReference>
<dbReference type="SMART" id="SM00737">
    <property type="entry name" value="ML"/>
    <property type="match status" value="1"/>
</dbReference>
<dbReference type="SUPFAM" id="SSF81296">
    <property type="entry name" value="E set domains"/>
    <property type="match status" value="1"/>
</dbReference>
<feature type="signal peptide" evidence="2">
    <location>
        <begin position="1"/>
        <end position="21"/>
    </location>
</feature>
<feature type="propeptide" id="PRO_0000019871" evidence="1">
    <location>
        <begin position="22"/>
        <end position="37"/>
    </location>
</feature>
<feature type="chain" id="PRO_0000019872" description="Phosphatidylglycerol/phosphatidylinositol transfer protein">
    <location>
        <begin position="38"/>
        <end position="175"/>
    </location>
</feature>
<reference key="1">
    <citation type="journal article" date="2005" name="Nature">
        <title>Genomic sequence of the pathogenic and allergenic filamentous fungus Aspergillus fumigatus.</title>
        <authorList>
            <person name="Nierman W.C."/>
            <person name="Pain A."/>
            <person name="Anderson M.J."/>
            <person name="Wortman J.R."/>
            <person name="Kim H.S."/>
            <person name="Arroyo J."/>
            <person name="Berriman M."/>
            <person name="Abe K."/>
            <person name="Archer D.B."/>
            <person name="Bermejo C."/>
            <person name="Bennett J.W."/>
            <person name="Bowyer P."/>
            <person name="Chen D."/>
            <person name="Collins M."/>
            <person name="Coulsen R."/>
            <person name="Davies R."/>
            <person name="Dyer P.S."/>
            <person name="Farman M.L."/>
            <person name="Fedorova N."/>
            <person name="Fedorova N.D."/>
            <person name="Feldblyum T.V."/>
            <person name="Fischer R."/>
            <person name="Fosker N."/>
            <person name="Fraser A."/>
            <person name="Garcia J.L."/>
            <person name="Garcia M.J."/>
            <person name="Goble A."/>
            <person name="Goldman G.H."/>
            <person name="Gomi K."/>
            <person name="Griffith-Jones S."/>
            <person name="Gwilliam R."/>
            <person name="Haas B.J."/>
            <person name="Haas H."/>
            <person name="Harris D.E."/>
            <person name="Horiuchi H."/>
            <person name="Huang J."/>
            <person name="Humphray S."/>
            <person name="Jimenez J."/>
            <person name="Keller N."/>
            <person name="Khouri H."/>
            <person name="Kitamoto K."/>
            <person name="Kobayashi T."/>
            <person name="Konzack S."/>
            <person name="Kulkarni R."/>
            <person name="Kumagai T."/>
            <person name="Lafton A."/>
            <person name="Latge J.-P."/>
            <person name="Li W."/>
            <person name="Lord A."/>
            <person name="Lu C."/>
            <person name="Majoros W.H."/>
            <person name="May G.S."/>
            <person name="Miller B.L."/>
            <person name="Mohamoud Y."/>
            <person name="Molina M."/>
            <person name="Monod M."/>
            <person name="Mouyna I."/>
            <person name="Mulligan S."/>
            <person name="Murphy L.D."/>
            <person name="O'Neil S."/>
            <person name="Paulsen I."/>
            <person name="Penalva M.A."/>
            <person name="Pertea M."/>
            <person name="Price C."/>
            <person name="Pritchard B.L."/>
            <person name="Quail M.A."/>
            <person name="Rabbinowitsch E."/>
            <person name="Rawlins N."/>
            <person name="Rajandream M.A."/>
            <person name="Reichard U."/>
            <person name="Renauld H."/>
            <person name="Robson G.D."/>
            <person name="Rodriguez de Cordoba S."/>
            <person name="Rodriguez-Pena J.M."/>
            <person name="Ronning C.M."/>
            <person name="Rutter S."/>
            <person name="Salzberg S.L."/>
            <person name="Sanchez M."/>
            <person name="Sanchez-Ferrero J.C."/>
            <person name="Saunders D."/>
            <person name="Seeger K."/>
            <person name="Squares R."/>
            <person name="Squares S."/>
            <person name="Takeuchi M."/>
            <person name="Tekaia F."/>
            <person name="Turner G."/>
            <person name="Vazquez de Aldana C.R."/>
            <person name="Weidman J."/>
            <person name="White O."/>
            <person name="Woodward J.R."/>
            <person name="Yu J.-H."/>
            <person name="Fraser C.M."/>
            <person name="Galagan J.E."/>
            <person name="Asai K."/>
            <person name="Machida M."/>
            <person name="Hall N."/>
            <person name="Barrell B.G."/>
            <person name="Denning D.W."/>
        </authorList>
    </citation>
    <scope>NUCLEOTIDE SEQUENCE [LARGE SCALE GENOMIC DNA]</scope>
    <source>
        <strain>ATCC MYA-4609 / CBS 101355 / FGSC A1100 / Af293</strain>
    </source>
</reference>
<protein>
    <recommendedName>
        <fullName>Phosphatidylglycerol/phosphatidylinositol transfer protein</fullName>
        <shortName>PG/PI-TP</shortName>
    </recommendedName>
</protein>
<comment type="function">
    <text evidence="1">Catalyzes the intermembrane transfer of phosphatidylglycerol and phosphatidylinositol.</text>
</comment>
<comment type="subunit">
    <text evidence="1">Monomer.</text>
</comment>
<comment type="similarity">
    <text evidence="3">Belongs to the NPC2 family.</text>
</comment>
<comment type="sequence caution" evidence="3">
    <conflict type="erroneous initiation">
        <sequence resource="EMBL-CDS" id="EAL93429"/>
    </conflict>
</comment>
<evidence type="ECO:0000250" key="1"/>
<evidence type="ECO:0000255" key="2"/>
<evidence type="ECO:0000305" key="3"/>
<organism>
    <name type="scientific">Aspergillus fumigatus (strain ATCC MYA-4609 / CBS 101355 / FGSC A1100 / Af293)</name>
    <name type="common">Neosartorya fumigata</name>
    <dbReference type="NCBI Taxonomy" id="330879"/>
    <lineage>
        <taxon>Eukaryota</taxon>
        <taxon>Fungi</taxon>
        <taxon>Dikarya</taxon>
        <taxon>Ascomycota</taxon>
        <taxon>Pezizomycotina</taxon>
        <taxon>Eurotiomycetes</taxon>
        <taxon>Eurotiomycetidae</taxon>
        <taxon>Eurotiales</taxon>
        <taxon>Aspergillaceae</taxon>
        <taxon>Aspergillus</taxon>
        <taxon>Aspergillus subgen. Fumigati</taxon>
    </lineage>
</organism>
<accession>Q4X136</accession>
<proteinExistence type="inferred from homology"/>
<name>NPC2_ASPFU</name>
<gene>
    <name type="primary">npc2</name>
    <name type="ORF">AFUA_2G11340</name>
</gene>
<sequence>MKLISTAATLFVCLAPLSASARSISFFDSTQAPIQLETFPVKGDNPLVYCSDPSGNILQIESVDLVPNPPLPGQTLSINASGNLKERVEEGAYVALEVKYGLITLIKQTADLCEQIKNVDLECPLEKGEMTLTKQVDLPSHIPPGKYNVHADVYTKDGKKITCLDAHDIEFKIRP</sequence>
<keyword id="KW-0445">Lipid transport</keyword>
<keyword id="KW-1185">Reference proteome</keyword>
<keyword id="KW-0732">Signal</keyword>
<keyword id="KW-0813">Transport</keyword>